<feature type="signal peptide" evidence="1">
    <location>
        <begin position="1"/>
        <end position="25"/>
    </location>
</feature>
<feature type="chain" id="PRO_0000023852" description="Cytochrome c6">
    <location>
        <begin position="26"/>
        <end position="110"/>
    </location>
</feature>
<feature type="binding site" description="covalent" evidence="1">
    <location>
        <position position="39"/>
    </location>
    <ligand>
        <name>heme c</name>
        <dbReference type="ChEBI" id="CHEBI:61717"/>
    </ligand>
</feature>
<feature type="binding site" description="covalent" evidence="1">
    <location>
        <position position="42"/>
    </location>
    <ligand>
        <name>heme c</name>
        <dbReference type="ChEBI" id="CHEBI:61717"/>
    </ligand>
</feature>
<feature type="binding site" description="axial binding residue" evidence="1">
    <location>
        <position position="43"/>
    </location>
    <ligand>
        <name>heme c</name>
        <dbReference type="ChEBI" id="CHEBI:61717"/>
    </ligand>
    <ligandPart>
        <name>Fe</name>
        <dbReference type="ChEBI" id="CHEBI:18248"/>
    </ligandPart>
</feature>
<feature type="binding site" description="axial binding residue" evidence="1">
    <location>
        <position position="83"/>
    </location>
    <ligand>
        <name>heme c</name>
        <dbReference type="ChEBI" id="CHEBI:61717"/>
    </ligand>
    <ligandPart>
        <name>Fe</name>
        <dbReference type="ChEBI" id="CHEBI:18248"/>
    </ligandPart>
</feature>
<name>CYC6_PORPU</name>
<accession>P51200</accession>
<reference key="1">
    <citation type="journal article" date="1995" name="Plant Mol. Biol. Rep.">
        <title>Complete nucleotide sequence of the Porphyra purpurea chloroplast genome.</title>
        <authorList>
            <person name="Reith M.E."/>
            <person name="Munholland J."/>
        </authorList>
    </citation>
    <scope>NUCLEOTIDE SEQUENCE [LARGE SCALE GENOMIC DNA]</scope>
    <source>
        <strain>Avonport</strain>
    </source>
</reference>
<geneLocation type="chloroplast"/>
<gene>
    <name type="primary">petJ</name>
</gene>
<keyword id="KW-0150">Chloroplast</keyword>
<keyword id="KW-0249">Electron transport</keyword>
<keyword id="KW-0349">Heme</keyword>
<keyword id="KW-0408">Iron</keyword>
<keyword id="KW-0479">Metal-binding</keyword>
<keyword id="KW-0602">Photosynthesis</keyword>
<keyword id="KW-0934">Plastid</keyword>
<keyword id="KW-0732">Signal</keyword>
<keyword id="KW-0793">Thylakoid</keyword>
<keyword id="KW-0813">Transport</keyword>
<protein>
    <recommendedName>
        <fullName>Cytochrome c6</fullName>
    </recommendedName>
    <alternativeName>
        <fullName>Cytochrome c-553</fullName>
    </alternativeName>
    <alternativeName>
        <fullName>Cytochrome c553</fullName>
    </alternativeName>
    <alternativeName>
        <fullName>Soluble cytochrome f</fullName>
    </alternativeName>
</protein>
<sequence length="110" mass="11745">MKKTLSVLFTAFSFCVIGFTQVAFAADLDNGEKVFSANCAACHAGGNNAIMPDKTLKKDVLEANSMNGIDAITYQVTNGKNAMPAFGGRLVDEDIEDAANYVLSQSEKGW</sequence>
<evidence type="ECO:0000250" key="1"/>
<evidence type="ECO:0000305" key="2"/>
<comment type="function">
    <text evidence="1">Functions as an electron carrier between membrane-bound cytochrome b6-f and photosystem I in oxygenic photosynthesis.</text>
</comment>
<comment type="subunit">
    <text evidence="1">Monomer.</text>
</comment>
<comment type="subcellular location">
    <subcellularLocation>
        <location evidence="1">Plastid</location>
        <location evidence="1">Chloroplast thylakoid lumen</location>
    </subcellularLocation>
</comment>
<comment type="PTM">
    <text evidence="1">Binds 1 heme c group covalently per subunit.</text>
</comment>
<comment type="similarity">
    <text evidence="2">Belongs to the cytochrome c family. PetJ subfamily.</text>
</comment>
<proteinExistence type="inferred from homology"/>
<dbReference type="EMBL" id="U38804">
    <property type="protein sequence ID" value="AAC08086.1"/>
    <property type="molecule type" value="Genomic_DNA"/>
</dbReference>
<dbReference type="PIR" id="S73121">
    <property type="entry name" value="S73121"/>
</dbReference>
<dbReference type="RefSeq" id="NP_053810.1">
    <property type="nucleotide sequence ID" value="NC_000925.1"/>
</dbReference>
<dbReference type="SMR" id="P51200"/>
<dbReference type="GeneID" id="809824"/>
<dbReference type="GO" id="GO:0009543">
    <property type="term" value="C:chloroplast thylakoid lumen"/>
    <property type="evidence" value="ECO:0007669"/>
    <property type="project" value="UniProtKB-SubCell"/>
</dbReference>
<dbReference type="GO" id="GO:0009055">
    <property type="term" value="F:electron transfer activity"/>
    <property type="evidence" value="ECO:0007669"/>
    <property type="project" value="UniProtKB-UniRule"/>
</dbReference>
<dbReference type="GO" id="GO:0020037">
    <property type="term" value="F:heme binding"/>
    <property type="evidence" value="ECO:0007669"/>
    <property type="project" value="InterPro"/>
</dbReference>
<dbReference type="GO" id="GO:0005506">
    <property type="term" value="F:iron ion binding"/>
    <property type="evidence" value="ECO:0007669"/>
    <property type="project" value="InterPro"/>
</dbReference>
<dbReference type="GO" id="GO:0015979">
    <property type="term" value="P:photosynthesis"/>
    <property type="evidence" value="ECO:0007669"/>
    <property type="project" value="UniProtKB-UniRule"/>
</dbReference>
<dbReference type="FunFam" id="1.10.760.10:FF:000038">
    <property type="entry name" value="Cytochrome c6"/>
    <property type="match status" value="1"/>
</dbReference>
<dbReference type="Gene3D" id="1.10.760.10">
    <property type="entry name" value="Cytochrome c-like domain"/>
    <property type="match status" value="1"/>
</dbReference>
<dbReference type="HAMAP" id="MF_00594">
    <property type="entry name" value="Cytc_PetJ"/>
    <property type="match status" value="1"/>
</dbReference>
<dbReference type="InterPro" id="IPR009056">
    <property type="entry name" value="Cyt_c-like_dom"/>
</dbReference>
<dbReference type="InterPro" id="IPR036909">
    <property type="entry name" value="Cyt_c-like_dom_sf"/>
</dbReference>
<dbReference type="InterPro" id="IPR023655">
    <property type="entry name" value="Cyt_C6"/>
</dbReference>
<dbReference type="InterPro" id="IPR008168">
    <property type="entry name" value="Cyt_C_IC"/>
</dbReference>
<dbReference type="NCBIfam" id="NF045930">
    <property type="entry name" value="Cytc6PetJCyano"/>
    <property type="match status" value="1"/>
</dbReference>
<dbReference type="PANTHER" id="PTHR34688">
    <property type="entry name" value="CYTOCHROME C6, CHLOROPLASTIC"/>
    <property type="match status" value="1"/>
</dbReference>
<dbReference type="PANTHER" id="PTHR34688:SF2">
    <property type="entry name" value="CYTOCHROME C6, CHLOROPLASTIC"/>
    <property type="match status" value="1"/>
</dbReference>
<dbReference type="Pfam" id="PF13442">
    <property type="entry name" value="Cytochrome_CBB3"/>
    <property type="match status" value="1"/>
</dbReference>
<dbReference type="PRINTS" id="PR00605">
    <property type="entry name" value="CYTCHROMECIC"/>
</dbReference>
<dbReference type="SUPFAM" id="SSF46626">
    <property type="entry name" value="Cytochrome c"/>
    <property type="match status" value="1"/>
</dbReference>
<dbReference type="PROSITE" id="PS51007">
    <property type="entry name" value="CYTC"/>
    <property type="match status" value="1"/>
</dbReference>
<organism>
    <name type="scientific">Porphyra purpurea</name>
    <name type="common">Red seaweed</name>
    <name type="synonym">Ulva purpurea</name>
    <dbReference type="NCBI Taxonomy" id="2787"/>
    <lineage>
        <taxon>Eukaryota</taxon>
        <taxon>Rhodophyta</taxon>
        <taxon>Bangiophyceae</taxon>
        <taxon>Bangiales</taxon>
        <taxon>Bangiaceae</taxon>
        <taxon>Porphyra</taxon>
    </lineage>
</organism>